<keyword id="KW-0007">Acetylation</keyword>
<keyword id="KW-0119">Carbohydrate metabolism</keyword>
<keyword id="KW-0313">Glucose metabolism</keyword>
<keyword id="KW-0378">Hydrolase</keyword>
<keyword id="KW-1185">Reference proteome</keyword>
<gene>
    <name evidence="1" type="primary">pgl</name>
    <name type="ordered locus">Z0938</name>
    <name type="ordered locus">ECs0795</name>
</gene>
<feature type="chain" id="PRO_0000171134" description="6-phosphogluconolactonase">
    <location>
        <begin position="1"/>
        <end position="331"/>
    </location>
</feature>
<feature type="modified residue" description="N6-acetyllysine" evidence="1">
    <location>
        <position position="287"/>
    </location>
</feature>
<accession>Q8X926</accession>
<dbReference type="EC" id="3.1.1.31" evidence="1"/>
<dbReference type="EMBL" id="AE005174">
    <property type="protein sequence ID" value="AAG55096.1"/>
    <property type="molecule type" value="Genomic_DNA"/>
</dbReference>
<dbReference type="EMBL" id="BA000007">
    <property type="protein sequence ID" value="BAB34218.1"/>
    <property type="molecule type" value="Genomic_DNA"/>
</dbReference>
<dbReference type="PIR" id="C90728">
    <property type="entry name" value="C90728"/>
</dbReference>
<dbReference type="PIR" id="D85579">
    <property type="entry name" value="D85579"/>
</dbReference>
<dbReference type="RefSeq" id="NP_308822.1">
    <property type="nucleotide sequence ID" value="NC_002695.1"/>
</dbReference>
<dbReference type="RefSeq" id="WP_000815433.1">
    <property type="nucleotide sequence ID" value="NZ_VOAI01000019.1"/>
</dbReference>
<dbReference type="SMR" id="Q8X926"/>
<dbReference type="STRING" id="155864.Z0938"/>
<dbReference type="GeneID" id="917534"/>
<dbReference type="KEGG" id="ece:Z0938"/>
<dbReference type="KEGG" id="ecs:ECs_0795"/>
<dbReference type="PATRIC" id="fig|386585.9.peg.915"/>
<dbReference type="eggNOG" id="COG2706">
    <property type="taxonomic scope" value="Bacteria"/>
</dbReference>
<dbReference type="HOGENOM" id="CLU_038716_2_0_6"/>
<dbReference type="OMA" id="NKEFIGY"/>
<dbReference type="UniPathway" id="UPA00115">
    <property type="reaction ID" value="UER00409"/>
</dbReference>
<dbReference type="Proteomes" id="UP000000558">
    <property type="component" value="Chromosome"/>
</dbReference>
<dbReference type="Proteomes" id="UP000002519">
    <property type="component" value="Chromosome"/>
</dbReference>
<dbReference type="GO" id="GO:0005829">
    <property type="term" value="C:cytosol"/>
    <property type="evidence" value="ECO:0007669"/>
    <property type="project" value="TreeGrafter"/>
</dbReference>
<dbReference type="GO" id="GO:0017057">
    <property type="term" value="F:6-phosphogluconolactonase activity"/>
    <property type="evidence" value="ECO:0007669"/>
    <property type="project" value="UniProtKB-UniRule"/>
</dbReference>
<dbReference type="GO" id="GO:0006006">
    <property type="term" value="P:glucose metabolic process"/>
    <property type="evidence" value="ECO:0007669"/>
    <property type="project" value="UniProtKB-KW"/>
</dbReference>
<dbReference type="GO" id="GO:0009051">
    <property type="term" value="P:pentose-phosphate shunt, oxidative branch"/>
    <property type="evidence" value="ECO:0007669"/>
    <property type="project" value="UniProtKB-UniRule"/>
</dbReference>
<dbReference type="FunFam" id="2.130.10.10:FF:000051">
    <property type="entry name" value="6-phosphogluconolactonase"/>
    <property type="match status" value="1"/>
</dbReference>
<dbReference type="Gene3D" id="2.130.10.10">
    <property type="entry name" value="YVTN repeat-like/Quinoprotein amine dehydrogenase"/>
    <property type="match status" value="1"/>
</dbReference>
<dbReference type="HAMAP" id="MF_01605">
    <property type="entry name" value="6P_gluconolactonase"/>
    <property type="match status" value="1"/>
</dbReference>
<dbReference type="InterPro" id="IPR022528">
    <property type="entry name" value="6-phosphogluconolactonase_YbhE"/>
</dbReference>
<dbReference type="InterPro" id="IPR050282">
    <property type="entry name" value="Cycloisomerase_2"/>
</dbReference>
<dbReference type="InterPro" id="IPR019405">
    <property type="entry name" value="Lactonase_7-beta_prop"/>
</dbReference>
<dbReference type="InterPro" id="IPR011045">
    <property type="entry name" value="N2O_reductase_N"/>
</dbReference>
<dbReference type="InterPro" id="IPR015943">
    <property type="entry name" value="WD40/YVTN_repeat-like_dom_sf"/>
</dbReference>
<dbReference type="NCBIfam" id="NF008258">
    <property type="entry name" value="PRK11028.1"/>
    <property type="match status" value="1"/>
</dbReference>
<dbReference type="PANTHER" id="PTHR30344:SF1">
    <property type="entry name" value="6-PHOSPHOGLUCONOLACTONASE"/>
    <property type="match status" value="1"/>
</dbReference>
<dbReference type="PANTHER" id="PTHR30344">
    <property type="entry name" value="6-PHOSPHOGLUCONOLACTONASE-RELATED"/>
    <property type="match status" value="1"/>
</dbReference>
<dbReference type="Pfam" id="PF10282">
    <property type="entry name" value="Lactonase"/>
    <property type="match status" value="1"/>
</dbReference>
<dbReference type="SUPFAM" id="SSF50974">
    <property type="entry name" value="Nitrous oxide reductase, N-terminal domain"/>
    <property type="match status" value="1"/>
</dbReference>
<proteinExistence type="inferred from homology"/>
<evidence type="ECO:0000255" key="1">
    <source>
        <dbReference type="HAMAP-Rule" id="MF_01605"/>
    </source>
</evidence>
<name>6PGL_ECO57</name>
<reference key="1">
    <citation type="journal article" date="2001" name="Nature">
        <title>Genome sequence of enterohaemorrhagic Escherichia coli O157:H7.</title>
        <authorList>
            <person name="Perna N.T."/>
            <person name="Plunkett G. III"/>
            <person name="Burland V."/>
            <person name="Mau B."/>
            <person name="Glasner J.D."/>
            <person name="Rose D.J."/>
            <person name="Mayhew G.F."/>
            <person name="Evans P.S."/>
            <person name="Gregor J."/>
            <person name="Kirkpatrick H.A."/>
            <person name="Posfai G."/>
            <person name="Hackett J."/>
            <person name="Klink S."/>
            <person name="Boutin A."/>
            <person name="Shao Y."/>
            <person name="Miller L."/>
            <person name="Grotbeck E.J."/>
            <person name="Davis N.W."/>
            <person name="Lim A."/>
            <person name="Dimalanta E.T."/>
            <person name="Potamousis K."/>
            <person name="Apodaca J."/>
            <person name="Anantharaman T.S."/>
            <person name="Lin J."/>
            <person name="Yen G."/>
            <person name="Schwartz D.C."/>
            <person name="Welch R.A."/>
            <person name="Blattner F.R."/>
        </authorList>
    </citation>
    <scope>NUCLEOTIDE SEQUENCE [LARGE SCALE GENOMIC DNA]</scope>
    <source>
        <strain>O157:H7 / EDL933 / ATCC 700927 / EHEC</strain>
    </source>
</reference>
<reference key="2">
    <citation type="journal article" date="2001" name="DNA Res.">
        <title>Complete genome sequence of enterohemorrhagic Escherichia coli O157:H7 and genomic comparison with a laboratory strain K-12.</title>
        <authorList>
            <person name="Hayashi T."/>
            <person name="Makino K."/>
            <person name="Ohnishi M."/>
            <person name="Kurokawa K."/>
            <person name="Ishii K."/>
            <person name="Yokoyama K."/>
            <person name="Han C.-G."/>
            <person name="Ohtsubo E."/>
            <person name="Nakayama K."/>
            <person name="Murata T."/>
            <person name="Tanaka M."/>
            <person name="Tobe T."/>
            <person name="Iida T."/>
            <person name="Takami H."/>
            <person name="Honda T."/>
            <person name="Sasakawa C."/>
            <person name="Ogasawara N."/>
            <person name="Yasunaga T."/>
            <person name="Kuhara S."/>
            <person name="Shiba T."/>
            <person name="Hattori M."/>
            <person name="Shinagawa H."/>
        </authorList>
    </citation>
    <scope>NUCLEOTIDE SEQUENCE [LARGE SCALE GENOMIC DNA]</scope>
    <source>
        <strain>O157:H7 / Sakai / RIMD 0509952 / EHEC</strain>
    </source>
</reference>
<comment type="function">
    <text evidence="1">Catalyzes the hydrolysis of 6-phosphogluconolactone to 6-phosphogluconate.</text>
</comment>
<comment type="catalytic activity">
    <reaction evidence="1">
        <text>6-phospho-D-glucono-1,5-lactone + H2O = 6-phospho-D-gluconate + H(+)</text>
        <dbReference type="Rhea" id="RHEA:12556"/>
        <dbReference type="ChEBI" id="CHEBI:15377"/>
        <dbReference type="ChEBI" id="CHEBI:15378"/>
        <dbReference type="ChEBI" id="CHEBI:57955"/>
        <dbReference type="ChEBI" id="CHEBI:58759"/>
        <dbReference type="EC" id="3.1.1.31"/>
    </reaction>
</comment>
<comment type="pathway">
    <text evidence="1">Carbohydrate degradation; pentose phosphate pathway; D-ribulose 5-phosphate from D-glucose 6-phosphate (oxidative stage): step 2/3.</text>
</comment>
<comment type="similarity">
    <text evidence="1">Belongs to the cycloisomerase 2 family.</text>
</comment>
<sequence length="331" mass="36391">MKQTVYIASPESQQIHVWNLNHEGALTLTQVVDVPGQVQPMVVSPDKRYLYVGVRPEFRVLAYRIAPDDGALTFAAESALPGSPTHISTDHQGQFVFVGSYNAGNVSVTRLEDGLPVGVVDVVEGLDGCHSANISPDNRTLWVPALKQDRICLFTVSDDGHLVAQDPAEVTTVEGAGPRHMVFHPNEQYAYCVNELNSSVDVWELKDPHGNIECVQTLDMMPENFSDTRWAADIHITPDGRHLYACDRTASLITVFSVSEDGSVLSKEGFQPTETQPRGFNIDHRGKYLIAAGQKSHHISVYEIVGEQGLLHEKGRYAVGQGPMWVVVNAH</sequence>
<protein>
    <recommendedName>
        <fullName evidence="1">6-phosphogluconolactonase</fullName>
        <shortName evidence="1">6-P-gluconolactonase</shortName>
        <ecNumber evidence="1">3.1.1.31</ecNumber>
    </recommendedName>
</protein>
<organism>
    <name type="scientific">Escherichia coli O157:H7</name>
    <dbReference type="NCBI Taxonomy" id="83334"/>
    <lineage>
        <taxon>Bacteria</taxon>
        <taxon>Pseudomonadati</taxon>
        <taxon>Pseudomonadota</taxon>
        <taxon>Gammaproteobacteria</taxon>
        <taxon>Enterobacterales</taxon>
        <taxon>Enterobacteriaceae</taxon>
        <taxon>Escherichia</taxon>
    </lineage>
</organism>